<keyword id="KW-0030">Aminoacyl-tRNA synthetase</keyword>
<keyword id="KW-0067">ATP-binding</keyword>
<keyword id="KW-0963">Cytoplasm</keyword>
<keyword id="KW-0436">Ligase</keyword>
<keyword id="KW-0547">Nucleotide-binding</keyword>
<keyword id="KW-0648">Protein biosynthesis</keyword>
<gene>
    <name evidence="1" type="primary">glnS</name>
    <name type="ordered locus">SPA2055</name>
</gene>
<protein>
    <recommendedName>
        <fullName evidence="1">Glutamine--tRNA ligase</fullName>
        <ecNumber evidence="1">6.1.1.18</ecNumber>
    </recommendedName>
    <alternativeName>
        <fullName evidence="1">Glutaminyl-tRNA synthetase</fullName>
        <shortName evidence="1">GlnRS</shortName>
    </alternativeName>
</protein>
<organism>
    <name type="scientific">Salmonella paratyphi A (strain ATCC 9150 / SARB42)</name>
    <dbReference type="NCBI Taxonomy" id="295319"/>
    <lineage>
        <taxon>Bacteria</taxon>
        <taxon>Pseudomonadati</taxon>
        <taxon>Pseudomonadota</taxon>
        <taxon>Gammaproteobacteria</taxon>
        <taxon>Enterobacterales</taxon>
        <taxon>Enterobacteriaceae</taxon>
        <taxon>Salmonella</taxon>
    </lineage>
</organism>
<comment type="catalytic activity">
    <reaction evidence="1">
        <text>tRNA(Gln) + L-glutamine + ATP = L-glutaminyl-tRNA(Gln) + AMP + diphosphate</text>
        <dbReference type="Rhea" id="RHEA:20121"/>
        <dbReference type="Rhea" id="RHEA-COMP:9662"/>
        <dbReference type="Rhea" id="RHEA-COMP:9681"/>
        <dbReference type="ChEBI" id="CHEBI:30616"/>
        <dbReference type="ChEBI" id="CHEBI:33019"/>
        <dbReference type="ChEBI" id="CHEBI:58359"/>
        <dbReference type="ChEBI" id="CHEBI:78442"/>
        <dbReference type="ChEBI" id="CHEBI:78521"/>
        <dbReference type="ChEBI" id="CHEBI:456215"/>
        <dbReference type="EC" id="6.1.1.18"/>
    </reaction>
</comment>
<comment type="subunit">
    <text evidence="1">Monomer.</text>
</comment>
<comment type="subcellular location">
    <subcellularLocation>
        <location evidence="1">Cytoplasm</location>
    </subcellularLocation>
</comment>
<comment type="similarity">
    <text evidence="1">Belongs to the class-I aminoacyl-tRNA synthetase family.</text>
</comment>
<feature type="chain" id="PRO_0000242874" description="Glutamine--tRNA ligase">
    <location>
        <begin position="1"/>
        <end position="555"/>
    </location>
</feature>
<feature type="region of interest" description="Interaction with tRNA" evidence="1">
    <location>
        <begin position="317"/>
        <end position="324"/>
    </location>
</feature>
<feature type="short sequence motif" description="'HIGH' region" evidence="1">
    <location>
        <begin position="34"/>
        <end position="44"/>
    </location>
</feature>
<feature type="short sequence motif" description="'KMSKS' region" evidence="1">
    <location>
        <begin position="268"/>
        <end position="272"/>
    </location>
</feature>
<feature type="binding site" evidence="1">
    <location>
        <begin position="35"/>
        <end position="37"/>
    </location>
    <ligand>
        <name>ATP</name>
        <dbReference type="ChEBI" id="CHEBI:30616"/>
    </ligand>
</feature>
<feature type="binding site" evidence="1">
    <location>
        <begin position="41"/>
        <end position="47"/>
    </location>
    <ligand>
        <name>ATP</name>
        <dbReference type="ChEBI" id="CHEBI:30616"/>
    </ligand>
</feature>
<feature type="binding site" evidence="1">
    <location>
        <position position="67"/>
    </location>
    <ligand>
        <name>L-glutamine</name>
        <dbReference type="ChEBI" id="CHEBI:58359"/>
    </ligand>
</feature>
<feature type="binding site" evidence="1">
    <location>
        <position position="212"/>
    </location>
    <ligand>
        <name>L-glutamine</name>
        <dbReference type="ChEBI" id="CHEBI:58359"/>
    </ligand>
</feature>
<feature type="binding site" evidence="1">
    <location>
        <position position="231"/>
    </location>
    <ligand>
        <name>ATP</name>
        <dbReference type="ChEBI" id="CHEBI:30616"/>
    </ligand>
</feature>
<feature type="binding site" evidence="1">
    <location>
        <begin position="261"/>
        <end position="262"/>
    </location>
    <ligand>
        <name>ATP</name>
        <dbReference type="ChEBI" id="CHEBI:30616"/>
    </ligand>
</feature>
<feature type="binding site" evidence="1">
    <location>
        <begin position="269"/>
        <end position="271"/>
    </location>
    <ligand>
        <name>ATP</name>
        <dbReference type="ChEBI" id="CHEBI:30616"/>
    </ligand>
</feature>
<dbReference type="EC" id="6.1.1.18" evidence="1"/>
<dbReference type="EMBL" id="CP000026">
    <property type="protein sequence ID" value="AAV77957.1"/>
    <property type="molecule type" value="Genomic_DNA"/>
</dbReference>
<dbReference type="RefSeq" id="WP_001287181.1">
    <property type="nucleotide sequence ID" value="NC_006511.1"/>
</dbReference>
<dbReference type="SMR" id="Q5PCH8"/>
<dbReference type="KEGG" id="spt:SPA2055"/>
<dbReference type="HOGENOM" id="CLU_001882_2_3_6"/>
<dbReference type="Proteomes" id="UP000008185">
    <property type="component" value="Chromosome"/>
</dbReference>
<dbReference type="GO" id="GO:0005829">
    <property type="term" value="C:cytosol"/>
    <property type="evidence" value="ECO:0007669"/>
    <property type="project" value="TreeGrafter"/>
</dbReference>
<dbReference type="GO" id="GO:0005524">
    <property type="term" value="F:ATP binding"/>
    <property type="evidence" value="ECO:0007669"/>
    <property type="project" value="UniProtKB-UniRule"/>
</dbReference>
<dbReference type="GO" id="GO:0004819">
    <property type="term" value="F:glutamine-tRNA ligase activity"/>
    <property type="evidence" value="ECO:0007669"/>
    <property type="project" value="UniProtKB-UniRule"/>
</dbReference>
<dbReference type="GO" id="GO:0006425">
    <property type="term" value="P:glutaminyl-tRNA aminoacylation"/>
    <property type="evidence" value="ECO:0007669"/>
    <property type="project" value="InterPro"/>
</dbReference>
<dbReference type="GO" id="GO:0006424">
    <property type="term" value="P:glutamyl-tRNA aminoacylation"/>
    <property type="evidence" value="ECO:0007669"/>
    <property type="project" value="UniProtKB-UniRule"/>
</dbReference>
<dbReference type="CDD" id="cd00807">
    <property type="entry name" value="GlnRS_core"/>
    <property type="match status" value="1"/>
</dbReference>
<dbReference type="FunFam" id="1.10.1160.10:FF:000001">
    <property type="entry name" value="Glutamine--tRNA ligase"/>
    <property type="match status" value="1"/>
</dbReference>
<dbReference type="FunFam" id="2.40.240.10:FF:000001">
    <property type="entry name" value="Glutamine--tRNA ligase"/>
    <property type="match status" value="1"/>
</dbReference>
<dbReference type="FunFam" id="2.40.240.10:FF:000003">
    <property type="entry name" value="Glutamine--tRNA ligase"/>
    <property type="match status" value="1"/>
</dbReference>
<dbReference type="FunFam" id="3.90.800.10:FF:000001">
    <property type="entry name" value="Glutamine--tRNA ligase"/>
    <property type="match status" value="1"/>
</dbReference>
<dbReference type="FunFam" id="3.40.50.620:FF:000037">
    <property type="entry name" value="Glutamine--tRNA ligase cytoplasmic"/>
    <property type="match status" value="1"/>
</dbReference>
<dbReference type="Gene3D" id="1.10.1160.10">
    <property type="entry name" value="Glutamyl-trna Synthetase, Domain 2"/>
    <property type="match status" value="1"/>
</dbReference>
<dbReference type="Gene3D" id="3.90.800.10">
    <property type="entry name" value="Glutamyl-tRNA Synthetase, Domain 3"/>
    <property type="match status" value="1"/>
</dbReference>
<dbReference type="Gene3D" id="3.40.50.620">
    <property type="entry name" value="HUPs"/>
    <property type="match status" value="1"/>
</dbReference>
<dbReference type="Gene3D" id="2.40.240.10">
    <property type="entry name" value="Ribosomal Protein L25, Chain P"/>
    <property type="match status" value="2"/>
</dbReference>
<dbReference type="HAMAP" id="MF_00126">
    <property type="entry name" value="Gln_tRNA_synth"/>
    <property type="match status" value="1"/>
</dbReference>
<dbReference type="InterPro" id="IPR001412">
    <property type="entry name" value="aa-tRNA-synth_I_CS"/>
</dbReference>
<dbReference type="InterPro" id="IPR004514">
    <property type="entry name" value="Gln-tRNA-synth"/>
</dbReference>
<dbReference type="InterPro" id="IPR050132">
    <property type="entry name" value="Gln/Glu-tRNA_Ligase"/>
</dbReference>
<dbReference type="InterPro" id="IPR022861">
    <property type="entry name" value="Gln_tRNA_ligase_bac"/>
</dbReference>
<dbReference type="InterPro" id="IPR000924">
    <property type="entry name" value="Glu/Gln-tRNA-synth"/>
</dbReference>
<dbReference type="InterPro" id="IPR020058">
    <property type="entry name" value="Glu/Gln-tRNA-synth_Ib_cat-dom"/>
</dbReference>
<dbReference type="InterPro" id="IPR020059">
    <property type="entry name" value="Glu/Gln-tRNA-synth_Ib_codon-bd"/>
</dbReference>
<dbReference type="InterPro" id="IPR020061">
    <property type="entry name" value="Glu_tRNA_lig_a-bdl"/>
</dbReference>
<dbReference type="InterPro" id="IPR020056">
    <property type="entry name" value="Rbsml_bL25/Gln-tRNA_synth_N"/>
</dbReference>
<dbReference type="InterPro" id="IPR011035">
    <property type="entry name" value="Ribosomal_bL25/Gln-tRNA_synth"/>
</dbReference>
<dbReference type="InterPro" id="IPR014729">
    <property type="entry name" value="Rossmann-like_a/b/a_fold"/>
</dbReference>
<dbReference type="InterPro" id="IPR049437">
    <property type="entry name" value="tRNA-synt_1c_C2"/>
</dbReference>
<dbReference type="NCBIfam" id="TIGR00440">
    <property type="entry name" value="glnS"/>
    <property type="match status" value="1"/>
</dbReference>
<dbReference type="NCBIfam" id="NF011291">
    <property type="entry name" value="PRK14703.1"/>
    <property type="match status" value="1"/>
</dbReference>
<dbReference type="PANTHER" id="PTHR43097:SF5">
    <property type="entry name" value="GLUTAMATE--TRNA LIGASE"/>
    <property type="match status" value="1"/>
</dbReference>
<dbReference type="PANTHER" id="PTHR43097">
    <property type="entry name" value="GLUTAMINE-TRNA LIGASE"/>
    <property type="match status" value="1"/>
</dbReference>
<dbReference type="Pfam" id="PF00749">
    <property type="entry name" value="tRNA-synt_1c"/>
    <property type="match status" value="1"/>
</dbReference>
<dbReference type="Pfam" id="PF03950">
    <property type="entry name" value="tRNA-synt_1c_C"/>
    <property type="match status" value="1"/>
</dbReference>
<dbReference type="Pfam" id="PF20974">
    <property type="entry name" value="tRNA-synt_1c_C2"/>
    <property type="match status" value="1"/>
</dbReference>
<dbReference type="PRINTS" id="PR00987">
    <property type="entry name" value="TRNASYNTHGLU"/>
</dbReference>
<dbReference type="SUPFAM" id="SSF52374">
    <property type="entry name" value="Nucleotidylyl transferase"/>
    <property type="match status" value="1"/>
</dbReference>
<dbReference type="SUPFAM" id="SSF50715">
    <property type="entry name" value="Ribosomal protein L25-like"/>
    <property type="match status" value="1"/>
</dbReference>
<dbReference type="PROSITE" id="PS00178">
    <property type="entry name" value="AA_TRNA_LIGASE_I"/>
    <property type="match status" value="1"/>
</dbReference>
<name>SYQ_SALPA</name>
<reference key="1">
    <citation type="journal article" date="2004" name="Nat. Genet.">
        <title>Comparison of genome degradation in Paratyphi A and Typhi, human-restricted serovars of Salmonella enterica that cause typhoid.</title>
        <authorList>
            <person name="McClelland M."/>
            <person name="Sanderson K.E."/>
            <person name="Clifton S.W."/>
            <person name="Latreille P."/>
            <person name="Porwollik S."/>
            <person name="Sabo A."/>
            <person name="Meyer R."/>
            <person name="Bieri T."/>
            <person name="Ozersky P."/>
            <person name="McLellan M."/>
            <person name="Harkins C.R."/>
            <person name="Wang C."/>
            <person name="Nguyen C."/>
            <person name="Berghoff A."/>
            <person name="Elliott G."/>
            <person name="Kohlberg S."/>
            <person name="Strong C."/>
            <person name="Du F."/>
            <person name="Carter J."/>
            <person name="Kremizki C."/>
            <person name="Layman D."/>
            <person name="Leonard S."/>
            <person name="Sun H."/>
            <person name="Fulton L."/>
            <person name="Nash W."/>
            <person name="Miner T."/>
            <person name="Minx P."/>
            <person name="Delehaunty K."/>
            <person name="Fronick C."/>
            <person name="Magrini V."/>
            <person name="Nhan M."/>
            <person name="Warren W."/>
            <person name="Florea L."/>
            <person name="Spieth J."/>
            <person name="Wilson R.K."/>
        </authorList>
    </citation>
    <scope>NUCLEOTIDE SEQUENCE [LARGE SCALE GENOMIC DNA]</scope>
    <source>
        <strain>ATCC 9150 / SARB42</strain>
    </source>
</reference>
<accession>Q5PCH8</accession>
<evidence type="ECO:0000255" key="1">
    <source>
        <dbReference type="HAMAP-Rule" id="MF_00126"/>
    </source>
</evidence>
<sequence>MSEAEARPTNFIRQIIDEDLASGKHTTVHTRFPPEPNGYLHIGHAKSICLNFGIAQDYQGQCNLRFDDTNPVKEDIEYVDSIKNDVEWLGFHWSGDIRYSSDYFDQLHAYAVELINKGLAYVDELTPEQIREYRGTLTAPGKNSPFRDRSVEENLALFEKMRTGGFEEGKACLRAKIDMASPFIVMRDPVLYRIKFAEHHQTGNKWCIYPMYDFTHCISDALEGITHSLCTLEFQDNRRLYDWVLDNITIPVHPRQYEFSRLNLEYTVMSKRKLNLLVTDKHVEGWDDPRMPTISGLRRRGYTAASIREFCKRIGVTKQDNTIEMASLESCIREDLNENAPRAMAVIDPVKLVIENYPQGESEMVTMPNHPNKPEMGSREVPFSGEIWIDRADFREEANKQYKRLVMGKEVRLRNAYVIKAERVEKDAEGNITTIFCTYDADTLSKDPADGRKVKGVIHWVSAAHALPIEIRLYDRLFSVPNPGAAEDFLSVINPESLVIKQGYGEPSLKAAVAGKAFQFEREGYFCLDSRYATADKLVFNRTVGLRDTWAKAGE</sequence>
<proteinExistence type="inferred from homology"/>